<feature type="chain" id="PRO_0000454785" description="Forkhead box protein fkh-4">
    <location>
        <begin position="1"/>
        <end position="421"/>
    </location>
</feature>
<feature type="DNA-binding region" description="Fork-head" evidence="2">
    <location>
        <begin position="118"/>
        <end position="218"/>
    </location>
</feature>
<evidence type="ECO:0000250" key="1">
    <source>
        <dbReference type="UniProtKB" id="Q12948"/>
    </source>
</evidence>
<evidence type="ECO:0000255" key="2">
    <source>
        <dbReference type="PROSITE-ProRule" id="PRU00089"/>
    </source>
</evidence>
<evidence type="ECO:0000269" key="3">
    <source>
    </source>
</evidence>
<evidence type="ECO:0000269" key="4">
    <source>
    </source>
</evidence>
<evidence type="ECO:0000305" key="5"/>
<evidence type="ECO:0000312" key="6">
    <source>
        <dbReference type="Proteomes" id="UP000001940"/>
    </source>
</evidence>
<evidence type="ECO:0000312" key="7">
    <source>
        <dbReference type="WormBase" id="C29F7.5"/>
    </source>
</evidence>
<keyword id="KW-0238">DNA-binding</keyword>
<keyword id="KW-0539">Nucleus</keyword>
<keyword id="KW-1185">Reference proteome</keyword>
<keyword id="KW-0804">Transcription</keyword>
<sequence>MQSNDENIYFPANQYVNAGQYSPLQQSFSQNSQYDLFDGFAEFGFLEQVPATNMYSGSQSTQMEQNYLPNVNNSTRKRKAPGQNEQATVKRRQIGIEKWRLPSRSVVQPSADISDLRRPPISYVALCALACRNAPDMKITPAGVYAFVLHHWRYYRYANENWKNSVRHQLSSKEHFDEETFQPDPSNPTVRRKFYIVKNPNMIRQNLISDADFDFFRKDSRGIEFYQKMFAGQIGLPRSLFYQIIGNGIPFLAGPENSSMFYQLLGMGKVVGYLETRYFREHYRSEHAATEPKYEEDYANFTEKIPSNAENLMSYGAATERNFQKFDFTDEEIELFHLNISSYHSVQKTCKECNLPNWCTPSVGDVETYVFGRQVPMPVNTPVILQQFETVAEQEGIRNNPLEERKTTEDPRDISILEALA</sequence>
<accession>O17617</accession>
<protein>
    <recommendedName>
        <fullName evidence="5">Forkhead box protein fkh-4</fullName>
    </recommendedName>
</protein>
<gene>
    <name evidence="7" type="primary">fkh-4</name>
    <name evidence="7" type="ORF">C29F7.5</name>
</gene>
<dbReference type="EMBL" id="BX284606">
    <property type="protein sequence ID" value="CAB07323.2"/>
    <property type="molecule type" value="Genomic_DNA"/>
</dbReference>
<dbReference type="RefSeq" id="NP_510238.2">
    <property type="nucleotide sequence ID" value="NM_077837.6"/>
</dbReference>
<dbReference type="SMR" id="O17617"/>
<dbReference type="FunCoup" id="O17617">
    <property type="interactions" value="300"/>
</dbReference>
<dbReference type="STRING" id="6239.C29F7.5.1"/>
<dbReference type="PaxDb" id="6239-C29F7.5"/>
<dbReference type="EnsemblMetazoa" id="C29F7.5.1">
    <property type="protein sequence ID" value="C29F7.5.1"/>
    <property type="gene ID" value="WBGene00001436"/>
</dbReference>
<dbReference type="GeneID" id="181466"/>
<dbReference type="KEGG" id="cel:CELE_C29F7.5"/>
<dbReference type="UCSC" id="C29F7.5">
    <property type="organism name" value="c. elegans"/>
</dbReference>
<dbReference type="AGR" id="WB:WBGene00001436"/>
<dbReference type="CTD" id="181466"/>
<dbReference type="WormBase" id="C29F7.5">
    <property type="protein sequence ID" value="CE45733"/>
    <property type="gene ID" value="WBGene00001436"/>
    <property type="gene designation" value="fkh-4"/>
</dbReference>
<dbReference type="eggNOG" id="KOG2294">
    <property type="taxonomic scope" value="Eukaryota"/>
</dbReference>
<dbReference type="GeneTree" id="ENSGT00970000197133"/>
<dbReference type="HOGENOM" id="CLU_696844_0_0_1"/>
<dbReference type="InParanoid" id="O17617"/>
<dbReference type="OrthoDB" id="5875547at2759"/>
<dbReference type="PhylomeDB" id="O17617"/>
<dbReference type="PRO" id="PR:O17617"/>
<dbReference type="Proteomes" id="UP000001940">
    <property type="component" value="Chromosome X"/>
</dbReference>
<dbReference type="Bgee" id="WBGene00001436">
    <property type="expression patterns" value="Expressed in embryo and 2 other cell types or tissues"/>
</dbReference>
<dbReference type="GO" id="GO:0005634">
    <property type="term" value="C:nucleus"/>
    <property type="evidence" value="ECO:0000314"/>
    <property type="project" value="WormBase"/>
</dbReference>
<dbReference type="GO" id="GO:0000981">
    <property type="term" value="F:DNA-binding transcription factor activity, RNA polymerase II-specific"/>
    <property type="evidence" value="ECO:0000318"/>
    <property type="project" value="GO_Central"/>
</dbReference>
<dbReference type="GO" id="GO:0000978">
    <property type="term" value="F:RNA polymerase II cis-regulatory region sequence-specific DNA binding"/>
    <property type="evidence" value="ECO:0000318"/>
    <property type="project" value="GO_Central"/>
</dbReference>
<dbReference type="GO" id="GO:0009653">
    <property type="term" value="P:anatomical structure morphogenesis"/>
    <property type="evidence" value="ECO:0000318"/>
    <property type="project" value="GO_Central"/>
</dbReference>
<dbReference type="GO" id="GO:0030154">
    <property type="term" value="P:cell differentiation"/>
    <property type="evidence" value="ECO:0000318"/>
    <property type="project" value="GO_Central"/>
</dbReference>
<dbReference type="GO" id="GO:0006357">
    <property type="term" value="P:regulation of transcription by RNA polymerase II"/>
    <property type="evidence" value="ECO:0000318"/>
    <property type="project" value="GO_Central"/>
</dbReference>
<dbReference type="CDD" id="cd00059">
    <property type="entry name" value="FH_FOX"/>
    <property type="match status" value="1"/>
</dbReference>
<dbReference type="FunFam" id="1.10.10.10:FF:001277">
    <property type="entry name" value="ForKHead transcription factor family"/>
    <property type="match status" value="1"/>
</dbReference>
<dbReference type="Gene3D" id="1.10.10.10">
    <property type="entry name" value="Winged helix-like DNA-binding domain superfamily/Winged helix DNA-binding domain"/>
    <property type="match status" value="1"/>
</dbReference>
<dbReference type="InterPro" id="IPR001766">
    <property type="entry name" value="Fork_head_dom"/>
</dbReference>
<dbReference type="InterPro" id="IPR050211">
    <property type="entry name" value="FOX_domain-containing"/>
</dbReference>
<dbReference type="InterPro" id="IPR030456">
    <property type="entry name" value="TF_fork_head_CS_2"/>
</dbReference>
<dbReference type="InterPro" id="IPR036388">
    <property type="entry name" value="WH-like_DNA-bd_sf"/>
</dbReference>
<dbReference type="InterPro" id="IPR036390">
    <property type="entry name" value="WH_DNA-bd_sf"/>
</dbReference>
<dbReference type="PANTHER" id="PTHR11829:SF388">
    <property type="entry name" value="FORK HEAD DOMAIN-CONTAINING PROTEIN L1-RELATED"/>
    <property type="match status" value="1"/>
</dbReference>
<dbReference type="PANTHER" id="PTHR11829">
    <property type="entry name" value="FORKHEAD BOX PROTEIN"/>
    <property type="match status" value="1"/>
</dbReference>
<dbReference type="Pfam" id="PF00250">
    <property type="entry name" value="Forkhead"/>
    <property type="match status" value="1"/>
</dbReference>
<dbReference type="PRINTS" id="PR00053">
    <property type="entry name" value="FORKHEAD"/>
</dbReference>
<dbReference type="SMART" id="SM00339">
    <property type="entry name" value="FH"/>
    <property type="match status" value="1"/>
</dbReference>
<dbReference type="SUPFAM" id="SSF46785">
    <property type="entry name" value="Winged helix' DNA-binding domain"/>
    <property type="match status" value="1"/>
</dbReference>
<dbReference type="PROSITE" id="PS00658">
    <property type="entry name" value="FORK_HEAD_2"/>
    <property type="match status" value="1"/>
</dbReference>
<dbReference type="PROSITE" id="PS50039">
    <property type="entry name" value="FORK_HEAD_3"/>
    <property type="match status" value="1"/>
</dbReference>
<proteinExistence type="evidence at transcript level"/>
<comment type="function">
    <text evidence="1 4">Transcription factor (By similarity). Regulates expression of a class of small RNAs, known as 21U-RNAs, perhaps acting redundantly with fkh-3 and fkh-5 (PubMed:22819322).</text>
</comment>
<comment type="subcellular location">
    <subcellularLocation>
        <location evidence="2 3">Nucleus</location>
    </subcellularLocation>
</comment>
<comment type="developmental stage">
    <text evidence="3">Expressed in most cells of the cleavage stage embryo, apart from a few cells at the posterior pole, from the 20 cell stage to the 200 cell stage (PubMed:12568714). Expressed in all descendents of the AB and EMS founder cells (PubMed:12568714).</text>
</comment>
<comment type="disruption phenotype">
    <text evidence="4">RNAi-mediated knockdown causes significant reduction in the expression of 21U-RNAs, upon simultaneous knockdown of fkh-3 and fkh-5.</text>
</comment>
<reference evidence="6" key="1">
    <citation type="journal article" date="1998" name="Science">
        <title>Genome sequence of the nematode C. elegans: a platform for investigating biology.</title>
        <authorList>
            <consortium name="The C. elegans sequencing consortium"/>
        </authorList>
    </citation>
    <scope>NUCLEOTIDE SEQUENCE [LARGE SCALE GENOMIC DNA]</scope>
    <source>
        <strain evidence="6">Bristol N2</strain>
    </source>
</reference>
<reference evidence="5" key="2">
    <citation type="journal article" date="2003" name="Gene">
        <title>The forkhead gene family of Caenorhabditis elegans.</title>
        <authorList>
            <person name="Hope I.A."/>
            <person name="Mounsey A."/>
            <person name="Bauer P."/>
            <person name="Aslam S."/>
        </authorList>
    </citation>
    <scope>SUBCELLULAR LOCATION</scope>
    <scope>DEVELOPMENTAL STAGE</scope>
</reference>
<reference evidence="5" key="3">
    <citation type="journal article" date="2012" name="Mol. Cell">
        <title>Promoters recognized by forkhead proteins exist for individual 21U-RNAs.</title>
        <authorList>
            <person name="Cecere G."/>
            <person name="Zheng G.X."/>
            <person name="Mansisidor A.R."/>
            <person name="Klymko K.E."/>
            <person name="Grishok A."/>
        </authorList>
    </citation>
    <scope>FUNCTION</scope>
    <scope>DISRUPTION PHENOTYPE</scope>
</reference>
<name>FKH4_CAEEL</name>
<organism evidence="6">
    <name type="scientific">Caenorhabditis elegans</name>
    <dbReference type="NCBI Taxonomy" id="6239"/>
    <lineage>
        <taxon>Eukaryota</taxon>
        <taxon>Metazoa</taxon>
        <taxon>Ecdysozoa</taxon>
        <taxon>Nematoda</taxon>
        <taxon>Chromadorea</taxon>
        <taxon>Rhabditida</taxon>
        <taxon>Rhabditina</taxon>
        <taxon>Rhabditomorpha</taxon>
        <taxon>Rhabditoidea</taxon>
        <taxon>Rhabditidae</taxon>
        <taxon>Peloderinae</taxon>
        <taxon>Caenorhabditis</taxon>
    </lineage>
</organism>